<evidence type="ECO:0000255" key="1"/>
<evidence type="ECO:0000269" key="2">
    <source>
    </source>
</evidence>
<evidence type="ECO:0000269" key="3">
    <source>
    </source>
</evidence>
<evidence type="ECO:0000269" key="4">
    <source>
    </source>
</evidence>
<evidence type="ECO:0000269" key="5">
    <source>
    </source>
</evidence>
<evidence type="ECO:0000269" key="6">
    <source>
    </source>
</evidence>
<evidence type="ECO:0000269" key="7">
    <source>
    </source>
</evidence>
<evidence type="ECO:0007744" key="8">
    <source>
        <dbReference type="PDB" id="1F2Q"/>
    </source>
</evidence>
<evidence type="ECO:0007744" key="9">
    <source>
        <dbReference type="PDB" id="1F6A"/>
    </source>
</evidence>
<evidence type="ECO:0007829" key="10">
    <source>
        <dbReference type="PDB" id="1F2Q"/>
    </source>
</evidence>
<evidence type="ECO:0007829" key="11">
    <source>
        <dbReference type="PDB" id="1F6A"/>
    </source>
</evidence>
<evidence type="ECO:0007829" key="12">
    <source>
        <dbReference type="PDB" id="1RPQ"/>
    </source>
</evidence>
<evidence type="ECO:0007829" key="13">
    <source>
        <dbReference type="PDB" id="2Y7Q"/>
    </source>
</evidence>
<evidence type="ECO:0007829" key="14">
    <source>
        <dbReference type="PDB" id="8YWA"/>
    </source>
</evidence>
<accession>P12319</accession>
<comment type="function">
    <text evidence="4 6">High-affinity receptor for immunoglobulin epsilon/IgE. Mediates IgE effector functions in myeloid cells. Upon IgE binding and antigen/allergen cross-linking initiates signaling pathways that lead to myeloid cell activation and differentiation. On mast cells, basophils and eosinophils stimulates the secretion of vasoactive amines, lipid mediators and cytokines that contribute to inflammatory response, tissue remodeling and cytotoxicity against microbes. Triggers the immediate hypersensitivity response to allergens as a host defense mechanism against helminth parasites, pathogenic bacteria and venom toxicity. When dysregulated, it can elicit harmful life-threatening allergic and anaphylactic reactions.</text>
</comment>
<comment type="subunit">
    <text evidence="2">Tetramer of an alpha chain, a beta chain, and two disulfide linked gamma chains. Interacts with IGHE (via CH3 region).</text>
</comment>
<comment type="interaction">
    <interactant intactId="EBI-3908910">
        <id>P12319</id>
    </interactant>
    <interactant intactId="EBI-6165891">
        <id>Q14696</id>
        <label>MESD</label>
    </interactant>
    <organismsDiffer>false</organismsDiffer>
    <experiments>3</experiments>
</comment>
<comment type="subcellular location">
    <subcellularLocation>
        <location evidence="4">Cell membrane</location>
        <topology>Single-pass type I membrane protein</topology>
    </subcellularLocation>
</comment>
<comment type="tissue specificity">
    <text evidence="4">Expressed in eosinophils.</text>
</comment>
<feature type="signal peptide" evidence="5">
    <location>
        <begin position="1"/>
        <end position="25"/>
    </location>
</feature>
<feature type="chain" id="PRO_0000015161" description="High affinity immunoglobulin epsilon receptor subunit alpha">
    <location>
        <begin position="26"/>
        <end position="257"/>
    </location>
</feature>
<feature type="topological domain" description="Extracellular" evidence="1">
    <location>
        <begin position="26"/>
        <end position="205"/>
    </location>
</feature>
<feature type="transmembrane region" description="Helical" evidence="1">
    <location>
        <begin position="206"/>
        <end position="224"/>
    </location>
</feature>
<feature type="topological domain" description="Cytoplasmic" evidence="1">
    <location>
        <begin position="225"/>
        <end position="257"/>
    </location>
</feature>
<feature type="domain" description="Ig-like 1">
    <location>
        <begin position="30"/>
        <end position="110"/>
    </location>
</feature>
<feature type="domain" description="Ig-like 2">
    <location>
        <begin position="111"/>
        <end position="193"/>
    </location>
</feature>
<feature type="glycosylation site" description="N-linked (GlcNAc...) asparagine" evidence="2 3 7">
    <location>
        <position position="46"/>
    </location>
</feature>
<feature type="glycosylation site" description="N-linked (GlcNAc...) asparagine" evidence="2 3 7">
    <location>
        <position position="67"/>
    </location>
</feature>
<feature type="glycosylation site" description="N-linked (GlcNAc...) asparagine" evidence="1">
    <location>
        <position position="75"/>
    </location>
</feature>
<feature type="glycosylation site" description="N-linked (GlcNAc...) asparagine" evidence="3">
    <location>
        <position position="99"/>
    </location>
</feature>
<feature type="glycosylation site" description="N-linked (GlcNAc...) asparagine" evidence="1">
    <location>
        <position position="160"/>
    </location>
</feature>
<feature type="glycosylation site" description="N-linked (GlcNAc...) asparagine" evidence="3">
    <location>
        <position position="165"/>
    </location>
</feature>
<feature type="glycosylation site" description="N-linked (GlcNAc...) asparagine" evidence="2 3 7">
    <location>
        <position position="191"/>
    </location>
</feature>
<feature type="disulfide bond" evidence="2 3 7 8 9">
    <location>
        <begin position="51"/>
        <end position="93"/>
    </location>
</feature>
<feature type="disulfide bond" evidence="2 3 7 8 9">
    <location>
        <begin position="132"/>
        <end position="176"/>
    </location>
</feature>
<feature type="sequence variant" id="VAR_020091" description="In dbSNP:rs2298804.">
    <original>K</original>
    <variation>R</variation>
    <location>
        <position position="84"/>
    </location>
</feature>
<feature type="sequence variant" id="VAR_020092" description="In dbSNP:rs2298805.">
    <original>S</original>
    <variation>N</variation>
    <location>
        <position position="101"/>
    </location>
</feature>
<feature type="strand" evidence="10">
    <location>
        <begin position="33"/>
        <end position="37"/>
    </location>
</feature>
<feature type="strand" evidence="10">
    <location>
        <begin position="39"/>
        <end position="42"/>
    </location>
</feature>
<feature type="strand" evidence="10">
    <location>
        <begin position="47"/>
        <end position="50"/>
    </location>
</feature>
<feature type="strand" evidence="11">
    <location>
        <begin position="53"/>
        <end position="55"/>
    </location>
</feature>
<feature type="strand" evidence="10">
    <location>
        <begin position="63"/>
        <end position="66"/>
    </location>
</feature>
<feature type="strand" evidence="13">
    <location>
        <begin position="69"/>
        <end position="72"/>
    </location>
</feature>
<feature type="strand" evidence="10">
    <location>
        <begin position="75"/>
        <end position="80"/>
    </location>
</feature>
<feature type="helix" evidence="10">
    <location>
        <begin position="85"/>
        <end position="87"/>
    </location>
</feature>
<feature type="strand" evidence="10">
    <location>
        <begin position="89"/>
        <end position="94"/>
    </location>
</feature>
<feature type="strand" evidence="12">
    <location>
        <begin position="96"/>
        <end position="99"/>
    </location>
</feature>
<feature type="strand" evidence="10">
    <location>
        <begin position="104"/>
        <end position="109"/>
    </location>
</feature>
<feature type="strand" evidence="10">
    <location>
        <begin position="111"/>
        <end position="118"/>
    </location>
</feature>
<feature type="strand" evidence="10">
    <location>
        <begin position="120"/>
        <end position="123"/>
    </location>
</feature>
<feature type="strand" evidence="10">
    <location>
        <begin position="128"/>
        <end position="134"/>
    </location>
</feature>
<feature type="helix" evidence="10">
    <location>
        <begin position="135"/>
        <end position="137"/>
    </location>
</feature>
<feature type="strand" evidence="10">
    <location>
        <begin position="140"/>
        <end position="147"/>
    </location>
</feature>
<feature type="strand" evidence="12">
    <location>
        <begin position="150"/>
        <end position="157"/>
    </location>
</feature>
<feature type="strand" evidence="10">
    <location>
        <begin position="158"/>
        <end position="165"/>
    </location>
</feature>
<feature type="helix" evidence="10">
    <location>
        <begin position="168"/>
        <end position="170"/>
    </location>
</feature>
<feature type="strand" evidence="10">
    <location>
        <begin position="172"/>
        <end position="180"/>
    </location>
</feature>
<feature type="strand" evidence="10">
    <location>
        <begin position="183"/>
        <end position="186"/>
    </location>
</feature>
<feature type="strand" evidence="10">
    <location>
        <begin position="190"/>
        <end position="195"/>
    </location>
</feature>
<feature type="helix" evidence="14">
    <location>
        <begin position="202"/>
        <end position="233"/>
    </location>
</feature>
<gene>
    <name type="primary">FCER1A</name>
    <name type="synonym">FCE1A</name>
</gene>
<organism>
    <name type="scientific">Homo sapiens</name>
    <name type="common">Human</name>
    <dbReference type="NCBI Taxonomy" id="9606"/>
    <lineage>
        <taxon>Eukaryota</taxon>
        <taxon>Metazoa</taxon>
        <taxon>Chordata</taxon>
        <taxon>Craniata</taxon>
        <taxon>Vertebrata</taxon>
        <taxon>Euteleostomi</taxon>
        <taxon>Mammalia</taxon>
        <taxon>Eutheria</taxon>
        <taxon>Euarchontoglires</taxon>
        <taxon>Primates</taxon>
        <taxon>Haplorrhini</taxon>
        <taxon>Catarrhini</taxon>
        <taxon>Hominidae</taxon>
        <taxon>Homo</taxon>
    </lineage>
</organism>
<proteinExistence type="evidence at protein level"/>
<sequence length="257" mass="29596">MAPAMESPTLLCVALLFFAPDGVLAVPQKPKVSLNPPWNRIFKGENVTLTCNGNNFFEVSSTKWFHNGSLSEETNSSLNIVNAKFEDSGEYKCQHQQVNESEPVYLEVFSDWLLLQASAEVVMEGQPLFLRCHGWRNWDVYKVIYYKDGEALKYWYENHNISITNATVEDSGTYYCTGKVWQLDYESEPLNITVIKAPREKYWLQFFIPLLVVILFAVDTGLFISTQQQVTFLLKIKRTRKGFRLLNPHPKPNPKNN</sequence>
<name>FCERA_HUMAN</name>
<reference key="1">
    <citation type="journal article" date="1988" name="Nucleic Acids Res.">
        <title>Isolation of the gene coding for the alpha subunit of the human high affinity IgE receptor.</title>
        <authorList>
            <person name="Kochan J."/>
            <person name="Pettine L.F."/>
            <person name="Hakimi J."/>
            <person name="Kishi K."/>
            <person name="Kinet J.-P."/>
        </authorList>
    </citation>
    <scope>NUCLEOTIDE SEQUENCE [MRNA]</scope>
</reference>
<reference key="2">
    <citation type="journal article" date="1988" name="Proc. Natl. Acad. Sci. U.S.A.">
        <title>Human and rat mast cell high-affinity immunoglobulin E receptors: characterization of putative alpha-chain gene products.</title>
        <authorList>
            <person name="Shimizu A."/>
            <person name="Tepler I."/>
            <person name="Benfey P.N."/>
            <person name="Berenstein E.H."/>
            <person name="Siraganian R.P."/>
            <person name="Leder P."/>
        </authorList>
    </citation>
    <scope>NUCLEOTIDE SEQUENCE [MRNA]</scope>
    <scope>PARTIAL PROTEIN SEQUENCE</scope>
    <source>
        <tissue>Mast cell</tissue>
    </source>
</reference>
<reference key="3">
    <citation type="journal article" date="2004" name="Genome Res.">
        <title>The status, quality, and expansion of the NIH full-length cDNA project: the Mammalian Gene Collection (MGC).</title>
        <authorList>
            <consortium name="The MGC Project Team"/>
        </authorList>
    </citation>
    <scope>NUCLEOTIDE SEQUENCE [LARGE SCALE MRNA]</scope>
    <source>
        <tissue>Prostate</tissue>
    </source>
</reference>
<reference key="4">
    <citation type="journal article" date="1994" name="Eur. J. Biochem.">
        <title>High-level expression of the truncated alpha chain of human high-affinity receptor for IgE as a soluble form by baculovirus-infected insect cells. Biochemical characterization of the recombinant product.</title>
        <authorList>
            <person name="Yagi S."/>
            <person name="Yanagida M."/>
            <person name="Tanida I."/>
            <person name="Hasegawa A."/>
            <person name="Okumura K."/>
            <person name="Ra C."/>
        </authorList>
    </citation>
    <scope>PROTEIN SEQUENCE OF 26-197</scope>
</reference>
<reference key="5">
    <citation type="journal article" date="1994" name="Nature">
        <title>High-affinity IgE receptor on eosinophils is involved in defence against parasites.</title>
        <authorList>
            <person name="Gounni A.S."/>
            <person name="Lamkhioued B."/>
            <person name="Ochiai K."/>
            <person name="Tanaka Y."/>
            <person name="Delaporte E."/>
            <person name="Capron A."/>
            <person name="Kinet J.P."/>
            <person name="Capron M."/>
        </authorList>
    </citation>
    <scope>FUNCTION</scope>
    <scope>SUBCELLULAR LOCATION</scope>
    <scope>TISSUE SPECIFICITY</scope>
</reference>
<reference key="6">
    <citation type="journal article" date="1996" name="J. Exp. Med.">
        <title>Transgenic mice expressing the human high-affinity immunoglobulin (Ig) E receptor alpha chain respond to human IgE in mast cell degranulation and in allergic reactions.</title>
        <authorList>
            <person name="Fung-Leung W.P."/>
            <person name="De Sousa-Hitzler J."/>
            <person name="Ishaque A."/>
            <person name="Zhou L."/>
            <person name="Pang J."/>
            <person name="Ngo K."/>
            <person name="Panakos J.A."/>
            <person name="Chourmouzis E."/>
            <person name="Liu F.T."/>
            <person name="Lau C.Y."/>
        </authorList>
    </citation>
    <scope>FUNCTION</scope>
</reference>
<reference key="7">
    <citation type="journal article" date="1992" name="Receptor">
        <title>A modeling study of the alpha-subunit of human high-affinity receptor for immunoglobulin-E.</title>
        <authorList>
            <person name="Padlan E.A."/>
            <person name="Helm B.A."/>
        </authorList>
    </citation>
    <scope>3D-STRUCTURE MODELING OF 26-197</scope>
</reference>
<reference key="8">
    <citation type="journal article" date="1998" name="Cell">
        <title>Crystal structure of the human high-affinity IgE receptor.</title>
        <authorList>
            <person name="Garman S.C."/>
            <person name="Kinet J.P."/>
            <person name="Jardetzky T.S."/>
        </authorList>
    </citation>
    <scope>X-RAY CRYSTALLOGRAPHY (2.4 ANGSTROMS) OF 26-201</scope>
    <scope>GLYCOSYLATION AT ASN-46; ASN-67 AND ASN-191</scope>
    <scope>DISULFIDE BONDS</scope>
</reference>
<reference key="9">
    <citation type="journal article" date="2000" name="Nature">
        <title>Structure of the Fc fragment of human IgE bound to its high-affinity receptor Fc epsilonRI alpha.</title>
        <authorList>
            <person name="Garman S.C."/>
            <person name="Wurzburg B.A."/>
            <person name="Tarchevskaya S.S."/>
            <person name="Kinet J.P."/>
            <person name="Jardetzky T.S."/>
        </authorList>
    </citation>
    <scope>X-RAY CRYSTALLOGRAPHY (3.50 ANGSTROMS) OF 26-201 IN COMPLEX WITH IGHE</scope>
    <scope>DISULFIDE BOND</scope>
    <scope>GLYCOSYLATION AT ASN-46; ASN-67 AND ASN-191</scope>
</reference>
<reference key="10">
    <citation type="journal article" date="2001" name="J. Mol. Biol.">
        <title>The analysis of the human high affinity IgE receptor Fc epsilon Ri alpha from multiple crystal forms.</title>
        <authorList>
            <person name="Garman S.C."/>
            <person name="Sechi S."/>
            <person name="Kinet J.P."/>
            <person name="Jardetzky T.S."/>
        </authorList>
    </citation>
    <scope>X-RAY CRYSTALLOGRAPHY (3.2 ANGSTROMS) OF 26-201</scope>
    <scope>GLYCOSYLATION AT ASN-46; ASN-67; ASN-99; ASN-165 AND ASN-191</scope>
    <scope>DISULFIDE BONDS</scope>
</reference>
<protein>
    <recommendedName>
        <fullName>High affinity immunoglobulin epsilon receptor subunit alpha</fullName>
    </recommendedName>
    <alternativeName>
        <fullName>Fc-epsilon RI-alpha</fullName>
        <shortName>FcERI</shortName>
    </alternativeName>
    <alternativeName>
        <fullName>IgE Fc receptor subunit alpha</fullName>
    </alternativeName>
</protein>
<keyword id="KW-0002">3D-structure</keyword>
<keyword id="KW-1003">Cell membrane</keyword>
<keyword id="KW-0903">Direct protein sequencing</keyword>
<keyword id="KW-1015">Disulfide bond</keyword>
<keyword id="KW-0325">Glycoprotein</keyword>
<keyword id="KW-0389">IgE-binding protein</keyword>
<keyword id="KW-0393">Immunoglobulin domain</keyword>
<keyword id="KW-0472">Membrane</keyword>
<keyword id="KW-1267">Proteomics identification</keyword>
<keyword id="KW-0675">Receptor</keyword>
<keyword id="KW-1185">Reference proteome</keyword>
<keyword id="KW-0677">Repeat</keyword>
<keyword id="KW-0732">Signal</keyword>
<keyword id="KW-0812">Transmembrane</keyword>
<keyword id="KW-1133">Transmembrane helix</keyword>
<dbReference type="EMBL" id="X06948">
    <property type="protein sequence ID" value="CAA30025.1"/>
    <property type="molecule type" value="mRNA"/>
</dbReference>
<dbReference type="EMBL" id="J03605">
    <property type="protein sequence ID" value="AAA36204.1"/>
    <property type="molecule type" value="mRNA"/>
</dbReference>
<dbReference type="EMBL" id="BC005912">
    <property type="protein sequence ID" value="AAH05912.1"/>
    <property type="molecule type" value="mRNA"/>
</dbReference>
<dbReference type="CCDS" id="CCDS1184.1"/>
<dbReference type="PIR" id="S00682">
    <property type="entry name" value="S00682"/>
</dbReference>
<dbReference type="RefSeq" id="NP_001374209.1">
    <property type="nucleotide sequence ID" value="NM_001387280.1"/>
</dbReference>
<dbReference type="RefSeq" id="NP_001992.1">
    <property type="nucleotide sequence ID" value="NM_002001.4"/>
</dbReference>
<dbReference type="PDB" id="1F2Q">
    <property type="method" value="X-ray"/>
    <property type="resolution" value="2.40 A"/>
    <property type="chains" value="A=26-201"/>
</dbReference>
<dbReference type="PDB" id="1F6A">
    <property type="method" value="X-ray"/>
    <property type="resolution" value="3.50 A"/>
    <property type="chains" value="A=26-201"/>
</dbReference>
<dbReference type="PDB" id="1J86">
    <property type="method" value="X-ray"/>
    <property type="resolution" value="3.20 A"/>
    <property type="chains" value="A/B=26-201"/>
</dbReference>
<dbReference type="PDB" id="1J87">
    <property type="method" value="X-ray"/>
    <property type="resolution" value="3.20 A"/>
    <property type="chains" value="A=26-197"/>
</dbReference>
<dbReference type="PDB" id="1J88">
    <property type="method" value="X-ray"/>
    <property type="resolution" value="3.20 A"/>
    <property type="chains" value="A/B/C/D/E=26-197"/>
</dbReference>
<dbReference type="PDB" id="1J89">
    <property type="method" value="X-ray"/>
    <property type="resolution" value="4.10 A"/>
    <property type="chains" value="A/B/C/D/E=26-197"/>
</dbReference>
<dbReference type="PDB" id="1RPQ">
    <property type="method" value="X-ray"/>
    <property type="resolution" value="3.00 A"/>
    <property type="chains" value="A/B/C/D=26-201"/>
</dbReference>
<dbReference type="PDB" id="2Y7Q">
    <property type="method" value="X-ray"/>
    <property type="resolution" value="3.40 A"/>
    <property type="chains" value="A=26-201"/>
</dbReference>
<dbReference type="PDB" id="7SHT">
    <property type="method" value="EM"/>
    <property type="resolution" value="7.29 A"/>
    <property type="chains" value="A=30-197"/>
</dbReference>
<dbReference type="PDB" id="8C1B">
    <property type="method" value="EM"/>
    <property type="resolution" value="3.80 A"/>
    <property type="chains" value="R=29-197"/>
</dbReference>
<dbReference type="PDB" id="8C1C">
    <property type="method" value="EM"/>
    <property type="resolution" value="4.10 A"/>
    <property type="chains" value="R=29-199"/>
</dbReference>
<dbReference type="PDB" id="8K7R">
    <property type="method" value="EM"/>
    <property type="resolution" value="3.56 A"/>
    <property type="chains" value="A=1-257"/>
</dbReference>
<dbReference type="PDB" id="8YVU">
    <property type="method" value="EM"/>
    <property type="resolution" value="3.90 A"/>
    <property type="chains" value="A/E=201-237"/>
</dbReference>
<dbReference type="PDB" id="8YWA">
    <property type="method" value="EM"/>
    <property type="resolution" value="3.14 A"/>
    <property type="chains" value="A=26-257"/>
</dbReference>
<dbReference type="PDB" id="8Z0T">
    <property type="method" value="EM"/>
    <property type="resolution" value="3.58 A"/>
    <property type="chains" value="A=1-257"/>
</dbReference>
<dbReference type="PDB" id="9EQ3">
    <property type="method" value="EM"/>
    <property type="resolution" value="6.90 A"/>
    <property type="chains" value="R=29-199"/>
</dbReference>
<dbReference type="PDB" id="9EQ4">
    <property type="method" value="EM"/>
    <property type="resolution" value="8.40 A"/>
    <property type="chains" value="R=29-199"/>
</dbReference>
<dbReference type="PDBsum" id="1F2Q"/>
<dbReference type="PDBsum" id="1F6A"/>
<dbReference type="PDBsum" id="1J86"/>
<dbReference type="PDBsum" id="1J87"/>
<dbReference type="PDBsum" id="1J88"/>
<dbReference type="PDBsum" id="1J89"/>
<dbReference type="PDBsum" id="1RPQ"/>
<dbReference type="PDBsum" id="2Y7Q"/>
<dbReference type="PDBsum" id="7SHT"/>
<dbReference type="PDBsum" id="8C1B"/>
<dbReference type="PDBsum" id="8C1C"/>
<dbReference type="PDBsum" id="8K7R"/>
<dbReference type="PDBsum" id="8YVU"/>
<dbReference type="PDBsum" id="8YWA"/>
<dbReference type="PDBsum" id="8Z0T"/>
<dbReference type="PDBsum" id="9EQ3"/>
<dbReference type="PDBsum" id="9EQ4"/>
<dbReference type="EMDB" id="EMD-16377"/>
<dbReference type="EMDB" id="EMD-16378"/>
<dbReference type="EMDB" id="EMD-19895"/>
<dbReference type="EMDB" id="EMD-19896"/>
<dbReference type="EMDB" id="EMD-25136"/>
<dbReference type="EMDB" id="EMD-36939"/>
<dbReference type="EMDB" id="EMD-39614"/>
<dbReference type="EMDB" id="EMD-39627"/>
<dbReference type="SMR" id="P12319"/>
<dbReference type="BioGRID" id="108499">
    <property type="interactions" value="42"/>
</dbReference>
<dbReference type="DIP" id="DIP-6166N"/>
<dbReference type="FunCoup" id="P12319">
    <property type="interactions" value="327"/>
</dbReference>
<dbReference type="IntAct" id="P12319">
    <property type="interactions" value="31"/>
</dbReference>
<dbReference type="STRING" id="9606.ENSP00000357097"/>
<dbReference type="BindingDB" id="P12319"/>
<dbReference type="ChEMBL" id="CHEMBL2248"/>
<dbReference type="DrugBank" id="DB00895">
    <property type="generic name" value="Benzylpenicilloyl polylysine"/>
</dbReference>
<dbReference type="DrugBank" id="DB05797">
    <property type="generic name" value="TNX-901"/>
</dbReference>
<dbReference type="GuidetoPHARMACOLOGY" id="2933"/>
<dbReference type="GlyCosmos" id="P12319">
    <property type="glycosylation" value="7 sites, No reported glycans"/>
</dbReference>
<dbReference type="GlyGen" id="P12319">
    <property type="glycosylation" value="7 sites"/>
</dbReference>
<dbReference type="iPTMnet" id="P12319"/>
<dbReference type="PhosphoSitePlus" id="P12319"/>
<dbReference type="BioMuta" id="FCER1A"/>
<dbReference type="DMDM" id="119865"/>
<dbReference type="MassIVE" id="P12319"/>
<dbReference type="PaxDb" id="9606-ENSP00000357097"/>
<dbReference type="PeptideAtlas" id="P12319"/>
<dbReference type="ABCD" id="P12319">
    <property type="antibodies" value="6 sequenced antibodies"/>
</dbReference>
<dbReference type="Antibodypedia" id="20472">
    <property type="antibodies" value="762 antibodies from 38 providers"/>
</dbReference>
<dbReference type="DNASU" id="2205"/>
<dbReference type="Ensembl" id="ENST00000368115.5">
    <property type="protein sequence ID" value="ENSP00000357097.1"/>
    <property type="gene ID" value="ENSG00000179639.11"/>
</dbReference>
<dbReference type="Ensembl" id="ENST00000693622.1">
    <property type="protein sequence ID" value="ENSP00000509626.1"/>
    <property type="gene ID" value="ENSG00000179639.11"/>
</dbReference>
<dbReference type="Ensembl" id="ENST00000709171.1">
    <property type="protein sequence ID" value="ENSP00000517534.1"/>
    <property type="gene ID" value="ENSG00000291905.1"/>
</dbReference>
<dbReference type="Ensembl" id="ENST00000709173.1">
    <property type="protein sequence ID" value="ENSP00000517536.1"/>
    <property type="gene ID" value="ENSG00000291905.1"/>
</dbReference>
<dbReference type="GeneID" id="2205"/>
<dbReference type="KEGG" id="hsa:2205"/>
<dbReference type="MANE-Select" id="ENST00000693622.1">
    <property type="protein sequence ID" value="ENSP00000509626.1"/>
    <property type="RefSeq nucleotide sequence ID" value="NM_001387280.1"/>
    <property type="RefSeq protein sequence ID" value="NP_001374209.1"/>
</dbReference>
<dbReference type="UCSC" id="uc001ftq.4">
    <property type="organism name" value="human"/>
</dbReference>
<dbReference type="AGR" id="HGNC:3609"/>
<dbReference type="CTD" id="2205"/>
<dbReference type="DisGeNET" id="2205"/>
<dbReference type="GeneCards" id="FCER1A"/>
<dbReference type="HGNC" id="HGNC:3609">
    <property type="gene designation" value="FCER1A"/>
</dbReference>
<dbReference type="HPA" id="ENSG00000179639">
    <property type="expression patterns" value="Tissue enhanced (skin)"/>
</dbReference>
<dbReference type="MIM" id="147140">
    <property type="type" value="gene"/>
</dbReference>
<dbReference type="neXtProt" id="NX_P12319"/>
<dbReference type="OpenTargets" id="ENSG00000179639"/>
<dbReference type="PharmGKB" id="PA28056"/>
<dbReference type="VEuPathDB" id="HostDB:ENSG00000179639"/>
<dbReference type="eggNOG" id="ENOG502RTXR">
    <property type="taxonomic scope" value="Eukaryota"/>
</dbReference>
<dbReference type="GeneTree" id="ENSGT01050000244808"/>
<dbReference type="HOGENOM" id="CLU_023383_1_0_1"/>
<dbReference type="InParanoid" id="P12319"/>
<dbReference type="OMA" id="LIRCHSW"/>
<dbReference type="OrthoDB" id="8954737at2759"/>
<dbReference type="PAN-GO" id="P12319">
    <property type="GO annotations" value="4 GO annotations based on evolutionary models"/>
</dbReference>
<dbReference type="PhylomeDB" id="P12319"/>
<dbReference type="TreeFam" id="TF335097"/>
<dbReference type="PathwayCommons" id="P12319"/>
<dbReference type="Reactome" id="R-HSA-2454202">
    <property type="pathway name" value="Fc epsilon receptor (FCERI) signaling"/>
</dbReference>
<dbReference type="Reactome" id="R-HSA-2730905">
    <property type="pathway name" value="Role of LAT2/NTAL/LAB on calcium mobilization"/>
</dbReference>
<dbReference type="Reactome" id="R-HSA-2871796">
    <property type="pathway name" value="FCERI mediated MAPK activation"/>
</dbReference>
<dbReference type="Reactome" id="R-HSA-2871809">
    <property type="pathway name" value="FCERI mediated Ca+2 mobilization"/>
</dbReference>
<dbReference type="Reactome" id="R-HSA-2871837">
    <property type="pathway name" value="FCERI mediated NF-kB activation"/>
</dbReference>
<dbReference type="SignaLink" id="P12319"/>
<dbReference type="SIGNOR" id="P12319"/>
<dbReference type="BioGRID-ORCS" id="2205">
    <property type="hits" value="44 hits in 1146 CRISPR screens"/>
</dbReference>
<dbReference type="ChiTaRS" id="FCER1A">
    <property type="organism name" value="human"/>
</dbReference>
<dbReference type="EvolutionaryTrace" id="P12319"/>
<dbReference type="GeneWiki" id="FCER1A"/>
<dbReference type="GenomeRNAi" id="2205"/>
<dbReference type="Pharos" id="P12319">
    <property type="development level" value="Tbio"/>
</dbReference>
<dbReference type="PRO" id="PR:P12319"/>
<dbReference type="Proteomes" id="UP000005640">
    <property type="component" value="Chromosome 1"/>
</dbReference>
<dbReference type="RNAct" id="P12319">
    <property type="molecule type" value="protein"/>
</dbReference>
<dbReference type="Bgee" id="ENSG00000179639">
    <property type="expression patterns" value="Expressed in upper leg skin and 154 other cell types or tissues"/>
</dbReference>
<dbReference type="ExpressionAtlas" id="P12319">
    <property type="expression patterns" value="baseline and differential"/>
</dbReference>
<dbReference type="GO" id="GO:0009986">
    <property type="term" value="C:cell surface"/>
    <property type="evidence" value="ECO:0000314"/>
    <property type="project" value="UniProtKB"/>
</dbReference>
<dbReference type="GO" id="GO:0009897">
    <property type="term" value="C:external side of plasma membrane"/>
    <property type="evidence" value="ECO:0000318"/>
    <property type="project" value="GO_Central"/>
</dbReference>
<dbReference type="GO" id="GO:0005886">
    <property type="term" value="C:plasma membrane"/>
    <property type="evidence" value="ECO:0000314"/>
    <property type="project" value="UniProtKB"/>
</dbReference>
<dbReference type="GO" id="GO:0019768">
    <property type="term" value="F:high-affinity IgE receptor activity"/>
    <property type="evidence" value="ECO:0000314"/>
    <property type="project" value="UniProtKB"/>
</dbReference>
<dbReference type="GO" id="GO:0019863">
    <property type="term" value="F:IgE binding"/>
    <property type="evidence" value="ECO:0000314"/>
    <property type="project" value="UniProtKB"/>
</dbReference>
<dbReference type="GO" id="GO:0007166">
    <property type="term" value="P:cell surface receptor signaling pathway"/>
    <property type="evidence" value="ECO:0000318"/>
    <property type="project" value="GO_Central"/>
</dbReference>
<dbReference type="GO" id="GO:0043308">
    <property type="term" value="P:eosinophil degranulation"/>
    <property type="evidence" value="ECO:0000314"/>
    <property type="project" value="UniProtKB"/>
</dbReference>
<dbReference type="GO" id="GO:0016064">
    <property type="term" value="P:immunoglobulin mediated immune response"/>
    <property type="evidence" value="ECO:0000318"/>
    <property type="project" value="GO_Central"/>
</dbReference>
<dbReference type="GO" id="GO:0043303">
    <property type="term" value="P:mast cell degranulation"/>
    <property type="evidence" value="ECO:0000315"/>
    <property type="project" value="UniProtKB"/>
</dbReference>
<dbReference type="GO" id="GO:0042092">
    <property type="term" value="P:type 2 immune response"/>
    <property type="evidence" value="ECO:0000314"/>
    <property type="project" value="UniProtKB"/>
</dbReference>
<dbReference type="GO" id="GO:0016068">
    <property type="term" value="P:type I hypersensitivity"/>
    <property type="evidence" value="ECO:0000315"/>
    <property type="project" value="UniProtKB"/>
</dbReference>
<dbReference type="CDD" id="cd05752">
    <property type="entry name" value="Ig1_FcgammaR_like"/>
    <property type="match status" value="1"/>
</dbReference>
<dbReference type="CDD" id="cd05753">
    <property type="entry name" value="Ig2_FcgammaR_like"/>
    <property type="match status" value="1"/>
</dbReference>
<dbReference type="FunFam" id="2.60.40.10:FF:000217">
    <property type="entry name" value="High affinity immunoglobulin gamma Fc receptor I"/>
    <property type="match status" value="1"/>
</dbReference>
<dbReference type="FunFam" id="2.60.40.10:FF:000356">
    <property type="entry name" value="Low affinity immunoglobulin gamma Fc region receptor III-A"/>
    <property type="match status" value="1"/>
</dbReference>
<dbReference type="Gene3D" id="2.60.40.10">
    <property type="entry name" value="Immunoglobulins"/>
    <property type="match status" value="2"/>
</dbReference>
<dbReference type="InterPro" id="IPR007110">
    <property type="entry name" value="Ig-like_dom"/>
</dbReference>
<dbReference type="InterPro" id="IPR036179">
    <property type="entry name" value="Ig-like_dom_sf"/>
</dbReference>
<dbReference type="InterPro" id="IPR013783">
    <property type="entry name" value="Ig-like_fold"/>
</dbReference>
<dbReference type="InterPro" id="IPR050488">
    <property type="entry name" value="Ig_Fc_receptor"/>
</dbReference>
<dbReference type="InterPro" id="IPR003599">
    <property type="entry name" value="Ig_sub"/>
</dbReference>
<dbReference type="InterPro" id="IPR003598">
    <property type="entry name" value="Ig_sub2"/>
</dbReference>
<dbReference type="PANTHER" id="PTHR11481:SF12">
    <property type="entry name" value="HIGH AFFINITY IMMUNOGLOBULIN EPSILON RECEPTOR SUBUNIT ALPHA"/>
    <property type="match status" value="1"/>
</dbReference>
<dbReference type="PANTHER" id="PTHR11481">
    <property type="entry name" value="IMMUNOGLOBULIN FC RECEPTOR"/>
    <property type="match status" value="1"/>
</dbReference>
<dbReference type="Pfam" id="PF13895">
    <property type="entry name" value="Ig_2"/>
    <property type="match status" value="1"/>
</dbReference>
<dbReference type="Pfam" id="PF13927">
    <property type="entry name" value="Ig_3"/>
    <property type="match status" value="1"/>
</dbReference>
<dbReference type="SMART" id="SM00409">
    <property type="entry name" value="IG"/>
    <property type="match status" value="2"/>
</dbReference>
<dbReference type="SMART" id="SM00408">
    <property type="entry name" value="IGc2"/>
    <property type="match status" value="2"/>
</dbReference>
<dbReference type="SUPFAM" id="SSF48726">
    <property type="entry name" value="Immunoglobulin"/>
    <property type="match status" value="2"/>
</dbReference>
<dbReference type="PROSITE" id="PS50835">
    <property type="entry name" value="IG_LIKE"/>
    <property type="match status" value="2"/>
</dbReference>